<accession>Q88Z52</accession>
<accession>F9UKY9</accession>
<comment type="subunit">
    <text evidence="1">Part of the 50S ribosomal subunit.</text>
</comment>
<comment type="induction">
    <text evidence="2">In strain DPC2739 is induced in mid-exponential phase cells by exposure to 42 degrees Celsius for one hour.</text>
</comment>
<comment type="similarity">
    <text evidence="3">Belongs to the bacterial ribosomal protein bL31 family. Type B subfamily.</text>
</comment>
<feature type="chain" id="PRO_0000173232" description="Large ribosomal subunit protein bL31B">
    <location>
        <begin position="1"/>
        <end position="81"/>
    </location>
</feature>
<protein>
    <recommendedName>
        <fullName evidence="3">Large ribosomal subunit protein bL31B</fullName>
    </recommendedName>
    <alternativeName>
        <fullName>50S ribosomal protein L31 type B</fullName>
    </alternativeName>
</protein>
<name>RL31B_LACPL</name>
<evidence type="ECO:0000250" key="1"/>
<evidence type="ECO:0000269" key="2">
    <source>
    </source>
</evidence>
<evidence type="ECO:0000305" key="3"/>
<dbReference type="EMBL" id="AL935263">
    <property type="protein sequence ID" value="CCC78004.1"/>
    <property type="molecule type" value="Genomic_DNA"/>
</dbReference>
<dbReference type="RefSeq" id="WP_003637671.1">
    <property type="nucleotide sequence ID" value="NC_004567.2"/>
</dbReference>
<dbReference type="RefSeq" id="YP_004888518.1">
    <property type="nucleotide sequence ID" value="NC_004567.2"/>
</dbReference>
<dbReference type="SMR" id="Q88Z52"/>
<dbReference type="STRING" id="220668.lp_0512"/>
<dbReference type="EnsemblBacteria" id="CCC78004">
    <property type="protein sequence ID" value="CCC78004"/>
    <property type="gene ID" value="lp_0512"/>
</dbReference>
<dbReference type="KEGG" id="lpl:lp_0512"/>
<dbReference type="PATRIC" id="fig|220668.9.peg.421"/>
<dbReference type="eggNOG" id="COG0254">
    <property type="taxonomic scope" value="Bacteria"/>
</dbReference>
<dbReference type="HOGENOM" id="CLU_114306_2_2_9"/>
<dbReference type="OrthoDB" id="9803251at2"/>
<dbReference type="PhylomeDB" id="Q88Z52"/>
<dbReference type="Proteomes" id="UP000000432">
    <property type="component" value="Chromosome"/>
</dbReference>
<dbReference type="GO" id="GO:1990904">
    <property type="term" value="C:ribonucleoprotein complex"/>
    <property type="evidence" value="ECO:0007669"/>
    <property type="project" value="UniProtKB-KW"/>
</dbReference>
<dbReference type="GO" id="GO:0005840">
    <property type="term" value="C:ribosome"/>
    <property type="evidence" value="ECO:0007669"/>
    <property type="project" value="UniProtKB-KW"/>
</dbReference>
<dbReference type="GO" id="GO:0003735">
    <property type="term" value="F:structural constituent of ribosome"/>
    <property type="evidence" value="ECO:0007669"/>
    <property type="project" value="InterPro"/>
</dbReference>
<dbReference type="GO" id="GO:0006412">
    <property type="term" value="P:translation"/>
    <property type="evidence" value="ECO:0007669"/>
    <property type="project" value="UniProtKB-UniRule"/>
</dbReference>
<dbReference type="Gene3D" id="4.10.830.30">
    <property type="entry name" value="Ribosomal protein L31"/>
    <property type="match status" value="1"/>
</dbReference>
<dbReference type="HAMAP" id="MF_00502">
    <property type="entry name" value="Ribosomal_bL31_2"/>
    <property type="match status" value="1"/>
</dbReference>
<dbReference type="InterPro" id="IPR034704">
    <property type="entry name" value="Ribosomal_bL28/bL31-like_sf"/>
</dbReference>
<dbReference type="InterPro" id="IPR002150">
    <property type="entry name" value="Ribosomal_bL31"/>
</dbReference>
<dbReference type="InterPro" id="IPR027493">
    <property type="entry name" value="Ribosomal_bL31_B"/>
</dbReference>
<dbReference type="InterPro" id="IPR042105">
    <property type="entry name" value="Ribosomal_bL31_sf"/>
</dbReference>
<dbReference type="NCBIfam" id="TIGR00105">
    <property type="entry name" value="L31"/>
    <property type="match status" value="1"/>
</dbReference>
<dbReference type="NCBIfam" id="NF002462">
    <property type="entry name" value="PRK01678.1"/>
    <property type="match status" value="1"/>
</dbReference>
<dbReference type="PANTHER" id="PTHR33280">
    <property type="entry name" value="50S RIBOSOMAL PROTEIN L31, CHLOROPLASTIC"/>
    <property type="match status" value="1"/>
</dbReference>
<dbReference type="PANTHER" id="PTHR33280:SF1">
    <property type="entry name" value="LARGE RIBOSOMAL SUBUNIT PROTEIN BL31C"/>
    <property type="match status" value="1"/>
</dbReference>
<dbReference type="Pfam" id="PF01197">
    <property type="entry name" value="Ribosomal_L31"/>
    <property type="match status" value="1"/>
</dbReference>
<dbReference type="PRINTS" id="PR01249">
    <property type="entry name" value="RIBOSOMALL31"/>
</dbReference>
<dbReference type="SUPFAM" id="SSF143800">
    <property type="entry name" value="L28p-like"/>
    <property type="match status" value="1"/>
</dbReference>
<reference key="1">
    <citation type="journal article" date="2003" name="Proc. Natl. Acad. Sci. U.S.A.">
        <title>Complete genome sequence of Lactobacillus plantarum WCFS1.</title>
        <authorList>
            <person name="Kleerebezem M."/>
            <person name="Boekhorst J."/>
            <person name="van Kranenburg R."/>
            <person name="Molenaar D."/>
            <person name="Kuipers O.P."/>
            <person name="Leer R."/>
            <person name="Tarchini R."/>
            <person name="Peters S.A."/>
            <person name="Sandbrink H.M."/>
            <person name="Fiers M.W.E.J."/>
            <person name="Stiekema W."/>
            <person name="Klein Lankhorst R.M."/>
            <person name="Bron P.A."/>
            <person name="Hoffer S.M."/>
            <person name="Nierop Groot M.N."/>
            <person name="Kerkhoven R."/>
            <person name="De Vries M."/>
            <person name="Ursing B."/>
            <person name="De Vos W.M."/>
            <person name="Siezen R.J."/>
        </authorList>
    </citation>
    <scope>NUCLEOTIDE SEQUENCE [LARGE SCALE GENOMIC DNA]</scope>
    <source>
        <strain>ATCC BAA-793 / NCIMB 8826 / WCFS1</strain>
    </source>
</reference>
<reference key="2">
    <citation type="journal article" date="2012" name="J. Bacteriol.">
        <title>Complete resequencing and reannotation of the Lactobacillus plantarum WCFS1 genome.</title>
        <authorList>
            <person name="Siezen R.J."/>
            <person name="Francke C."/>
            <person name="Renckens B."/>
            <person name="Boekhorst J."/>
            <person name="Wels M."/>
            <person name="Kleerebezem M."/>
            <person name="van Hijum S.A."/>
        </authorList>
    </citation>
    <scope>NUCLEOTIDE SEQUENCE [LARGE SCALE GENOMIC DNA]</scope>
    <scope>GENOME REANNOTATION</scope>
    <source>
        <strain>ATCC BAA-793 / NCIMB 8826 / WCFS1</strain>
    </source>
</reference>
<reference key="3">
    <citation type="journal article" date="2004" name="Appl. Environ. Microbiol.">
        <title>Heat shock response in Lactobacillus plantarum.</title>
        <authorList>
            <person name="De Angelis M."/>
            <person name="Di Cagno R."/>
            <person name="Huet C."/>
            <person name="Crecchio C."/>
            <person name="Fox P.F."/>
            <person name="Gobbetti M."/>
        </authorList>
    </citation>
    <scope>PROTEIN SEQUENCE OF 1-14</scope>
    <scope>INDUCTION BY HEAT SHOCK</scope>
    <source>
        <strain>DPC2739</strain>
    </source>
</reference>
<keyword id="KW-0903">Direct protein sequencing</keyword>
<keyword id="KW-1185">Reference proteome</keyword>
<keyword id="KW-0687">Ribonucleoprotein</keyword>
<keyword id="KW-0689">Ribosomal protein</keyword>
<keyword id="KW-0346">Stress response</keyword>
<proteinExistence type="evidence at protein level"/>
<organism>
    <name type="scientific">Lactiplantibacillus plantarum (strain ATCC BAA-793 / NCIMB 8826 / WCFS1)</name>
    <name type="common">Lactobacillus plantarum</name>
    <dbReference type="NCBI Taxonomy" id="220668"/>
    <lineage>
        <taxon>Bacteria</taxon>
        <taxon>Bacillati</taxon>
        <taxon>Bacillota</taxon>
        <taxon>Bacilli</taxon>
        <taxon>Lactobacillales</taxon>
        <taxon>Lactobacillaceae</taxon>
        <taxon>Lactiplantibacillus</taxon>
    </lineage>
</organism>
<gene>
    <name type="primary">rpmE2</name>
    <name type="ordered locus">lp_0512</name>
</gene>
<sequence length="81" mass="9135">MQKGIHPDYHLVVFQDSTTGFKFISGSTATSAETVEWEDGNTYPLIRVEITSDSHPFYTGKQKFTKADGAVDRFNKKYGLK</sequence>